<dbReference type="EC" id="3.6.-.-" evidence="4"/>
<dbReference type="EMBL" id="AF520418">
    <property type="protein sequence ID" value="AAM74228.1"/>
    <property type="molecule type" value="mRNA"/>
</dbReference>
<dbReference type="EMBL" id="AL356121">
    <property type="status" value="NOT_ANNOTATED_CDS"/>
    <property type="molecule type" value="Genomic_DNA"/>
</dbReference>
<dbReference type="EMBL" id="Z98742">
    <property type="status" value="NOT_ANNOTATED_CDS"/>
    <property type="molecule type" value="Genomic_DNA"/>
</dbReference>
<dbReference type="EMBL" id="AL353706">
    <property type="status" value="NOT_ANNOTATED_CDS"/>
    <property type="molecule type" value="Genomic_DNA"/>
</dbReference>
<dbReference type="EMBL" id="AL139106">
    <property type="status" value="NOT_ANNOTATED_CDS"/>
    <property type="molecule type" value="Genomic_DNA"/>
</dbReference>
<dbReference type="EMBL" id="BC018445">
    <property type="protein sequence ID" value="AAH18445.2"/>
    <property type="molecule type" value="mRNA"/>
</dbReference>
<dbReference type="CCDS" id="CCDS5067.1"/>
<dbReference type="RefSeq" id="NP_001309934.1">
    <property type="nucleotide sequence ID" value="NM_001323005.1"/>
</dbReference>
<dbReference type="RefSeq" id="NP_660358.2">
    <property type="nucleotide sequence ID" value="NM_145315.4"/>
</dbReference>
<dbReference type="BioGRID" id="128885">
    <property type="interactions" value="14"/>
</dbReference>
<dbReference type="FunCoup" id="Q8WV93">
    <property type="interactions" value="2999"/>
</dbReference>
<dbReference type="IntAct" id="Q8WV93">
    <property type="interactions" value="10"/>
</dbReference>
<dbReference type="STRING" id="9606.ENSP00000357973"/>
<dbReference type="iPTMnet" id="Q8WV93"/>
<dbReference type="PhosphoSitePlus" id="Q8WV93"/>
<dbReference type="BioMuta" id="AFG1L"/>
<dbReference type="DMDM" id="74762631"/>
<dbReference type="jPOST" id="Q8WV93"/>
<dbReference type="MassIVE" id="Q8WV93"/>
<dbReference type="PaxDb" id="9606-ENSP00000357973"/>
<dbReference type="PeptideAtlas" id="Q8WV93"/>
<dbReference type="ProteomicsDB" id="74765"/>
<dbReference type="Pumba" id="Q8WV93"/>
<dbReference type="Antibodypedia" id="32213">
    <property type="antibodies" value="167 antibodies from 21 providers"/>
</dbReference>
<dbReference type="DNASU" id="246269"/>
<dbReference type="Ensembl" id="ENST00000368977.9">
    <property type="protein sequence ID" value="ENSP00000357973.3"/>
    <property type="gene ID" value="ENSG00000135537.17"/>
</dbReference>
<dbReference type="GeneID" id="246269"/>
<dbReference type="KEGG" id="hsa:246269"/>
<dbReference type="MANE-Select" id="ENST00000368977.9">
    <property type="protein sequence ID" value="ENSP00000357973.3"/>
    <property type="RefSeq nucleotide sequence ID" value="NM_145315.5"/>
    <property type="RefSeq protein sequence ID" value="NP_660358.2"/>
</dbReference>
<dbReference type="UCSC" id="uc003psj.4">
    <property type="organism name" value="human"/>
</dbReference>
<dbReference type="AGR" id="HGNC:16411"/>
<dbReference type="CTD" id="246269"/>
<dbReference type="DisGeNET" id="246269"/>
<dbReference type="GeneCards" id="AFG1L"/>
<dbReference type="HGNC" id="HGNC:16411">
    <property type="gene designation" value="AFG1L"/>
</dbReference>
<dbReference type="HPA" id="ENSG00000135537">
    <property type="expression patterns" value="Low tissue specificity"/>
</dbReference>
<dbReference type="MIM" id="617469">
    <property type="type" value="gene"/>
</dbReference>
<dbReference type="neXtProt" id="NX_Q8WV93"/>
<dbReference type="OpenTargets" id="ENSG00000135537"/>
<dbReference type="PharmGKB" id="PA38404"/>
<dbReference type="VEuPathDB" id="HostDB:ENSG00000135537"/>
<dbReference type="eggNOG" id="KOG2383">
    <property type="taxonomic scope" value="Eukaryota"/>
</dbReference>
<dbReference type="GeneTree" id="ENSGT00390000013227"/>
<dbReference type="HOGENOM" id="CLU_008681_3_1_1"/>
<dbReference type="InParanoid" id="Q8WV93"/>
<dbReference type="OMA" id="ARRFINM"/>
<dbReference type="OrthoDB" id="548867at2759"/>
<dbReference type="PAN-GO" id="Q8WV93">
    <property type="GO annotations" value="3 GO annotations based on evolutionary models"/>
</dbReference>
<dbReference type="PhylomeDB" id="Q8WV93"/>
<dbReference type="TreeFam" id="TF314551"/>
<dbReference type="PathwayCommons" id="Q8WV93"/>
<dbReference type="SignaLink" id="Q8WV93"/>
<dbReference type="BioGRID-ORCS" id="246269">
    <property type="hits" value="17 hits in 1158 CRISPR screens"/>
</dbReference>
<dbReference type="ChiTaRS" id="LACE1">
    <property type="organism name" value="human"/>
</dbReference>
<dbReference type="GenomeRNAi" id="246269"/>
<dbReference type="Pharos" id="Q8WV93">
    <property type="development level" value="Tbio"/>
</dbReference>
<dbReference type="PRO" id="PR:Q8WV93"/>
<dbReference type="Proteomes" id="UP000005640">
    <property type="component" value="Chromosome 6"/>
</dbReference>
<dbReference type="RNAct" id="Q8WV93">
    <property type="molecule type" value="protein"/>
</dbReference>
<dbReference type="Bgee" id="ENSG00000135537">
    <property type="expression patterns" value="Expressed in left testis and 102 other cell types or tissues"/>
</dbReference>
<dbReference type="ExpressionAtlas" id="Q8WV93">
    <property type="expression patterns" value="baseline and differential"/>
</dbReference>
<dbReference type="GO" id="GO:0005737">
    <property type="term" value="C:cytoplasm"/>
    <property type="evidence" value="ECO:0000318"/>
    <property type="project" value="GO_Central"/>
</dbReference>
<dbReference type="GO" id="GO:0031966">
    <property type="term" value="C:mitochondrial membrane"/>
    <property type="evidence" value="ECO:0000314"/>
    <property type="project" value="UniProtKB"/>
</dbReference>
<dbReference type="GO" id="GO:0005739">
    <property type="term" value="C:mitochondrion"/>
    <property type="evidence" value="ECO:0000314"/>
    <property type="project" value="UniProtKB"/>
</dbReference>
<dbReference type="GO" id="GO:0005524">
    <property type="term" value="F:ATP binding"/>
    <property type="evidence" value="ECO:0007669"/>
    <property type="project" value="UniProtKB-KW"/>
</dbReference>
<dbReference type="GO" id="GO:0016887">
    <property type="term" value="F:ATP hydrolysis activity"/>
    <property type="evidence" value="ECO:0000318"/>
    <property type="project" value="GO_Central"/>
</dbReference>
<dbReference type="GO" id="GO:0035694">
    <property type="term" value="P:mitochondrial protein catabolic process"/>
    <property type="evidence" value="ECO:0000315"/>
    <property type="project" value="UniProtKB"/>
</dbReference>
<dbReference type="GO" id="GO:0141164">
    <property type="term" value="P:mitochondrial protein quality control"/>
    <property type="evidence" value="ECO:0000315"/>
    <property type="project" value="UniProtKB"/>
</dbReference>
<dbReference type="GO" id="GO:0007005">
    <property type="term" value="P:mitochondrion organization"/>
    <property type="evidence" value="ECO:0000315"/>
    <property type="project" value="UniProtKB"/>
</dbReference>
<dbReference type="FunFam" id="3.40.50.300:FF:000735">
    <property type="entry name" value="Lactation elevated 1 (Predicted)"/>
    <property type="match status" value="1"/>
</dbReference>
<dbReference type="Gene3D" id="3.40.50.300">
    <property type="entry name" value="P-loop containing nucleotide triphosphate hydrolases"/>
    <property type="match status" value="1"/>
</dbReference>
<dbReference type="InterPro" id="IPR005654">
    <property type="entry name" value="ATPase_AFG1-like"/>
</dbReference>
<dbReference type="InterPro" id="IPR027417">
    <property type="entry name" value="P-loop_NTPase"/>
</dbReference>
<dbReference type="NCBIfam" id="NF040713">
    <property type="entry name" value="ZapE"/>
    <property type="match status" value="1"/>
</dbReference>
<dbReference type="PANTHER" id="PTHR12169:SF6">
    <property type="entry name" value="AFG1-LIKE ATPASE"/>
    <property type="match status" value="1"/>
</dbReference>
<dbReference type="PANTHER" id="PTHR12169">
    <property type="entry name" value="ATPASE N2B"/>
    <property type="match status" value="1"/>
</dbReference>
<dbReference type="Pfam" id="PF03969">
    <property type="entry name" value="AFG1_ATPase"/>
    <property type="match status" value="1"/>
</dbReference>
<dbReference type="SUPFAM" id="SSF52540">
    <property type="entry name" value="P-loop containing nucleoside triphosphate hydrolases"/>
    <property type="match status" value="1"/>
</dbReference>
<sequence>MAASWSLLVTLRPLAQSPLRGRCVGCGAWAAALAPLATAPGKPFWKAYTVQTSESMTPTATSETYLKALAVCHGPLDHYDFLIKAHELKDDEHQRRVIQCLQKLHEDLKGYNIEAEGLFSKLFSRSKPPRGLYVYGDVGTGKTMVMDMFYAYVEMKRKKRVHFHGFMLDVHKRIHRLKQSLPKRKPGFMAKSYDPIAPIAEEISEEACLLCFDEFQVTDIADAMILKQLFENLFKNGVVVVATSNRPPEDLYKNGLQRANFVPFIAVLKEYCNTVQLDSGIDYRKRELPAAGKLYYLTSEADVEAVMDKLFDELAQKQNDLTRPRILKVQGRELRLNKACGTVADCTFEELCERPLGASDYLELSKNFDTIFLRNIPQFTLANRTQGRRFITLIDNFYDLKVRIICSASTPISSLFLHQHHDSELEQSRILMDDLGLSQDSAEGLSMFTGEEEIFAFQRTISRLTEMQTEQYWNEGDRTKK</sequence>
<accession>Q8WV93</accession>
<accession>Q8N6A3</accession>
<organism>
    <name type="scientific">Homo sapiens</name>
    <name type="common">Human</name>
    <dbReference type="NCBI Taxonomy" id="9606"/>
    <lineage>
        <taxon>Eukaryota</taxon>
        <taxon>Metazoa</taxon>
        <taxon>Chordata</taxon>
        <taxon>Craniata</taxon>
        <taxon>Vertebrata</taxon>
        <taxon>Euteleostomi</taxon>
        <taxon>Mammalia</taxon>
        <taxon>Eutheria</taxon>
        <taxon>Euarchontoglires</taxon>
        <taxon>Primates</taxon>
        <taxon>Haplorrhini</taxon>
        <taxon>Catarrhini</taxon>
        <taxon>Hominidae</taxon>
        <taxon>Homo</taxon>
    </lineage>
</organism>
<evidence type="ECO:0000269" key="1">
    <source>
    </source>
</evidence>
<evidence type="ECO:0000269" key="2">
    <source>
    </source>
</evidence>
<evidence type="ECO:0000303" key="3">
    <source>
    </source>
</evidence>
<evidence type="ECO:0000305" key="4"/>
<evidence type="ECO:0000312" key="5">
    <source>
        <dbReference type="HGNC" id="HGNC:16411"/>
    </source>
</evidence>
<protein>
    <recommendedName>
        <fullName evidence="5">AFG1-like ATPase</fullName>
    </recommendedName>
    <alternativeName>
        <fullName evidence="3">Lactation elevated protein 1</fullName>
        <ecNumber evidence="4">3.6.-.-</ecNumber>
    </alternativeName>
    <alternativeName>
        <fullName>Protein AFG1 homolog</fullName>
    </alternativeName>
</protein>
<keyword id="KW-0067">ATP-binding</keyword>
<keyword id="KW-0378">Hydrolase</keyword>
<keyword id="KW-0472">Membrane</keyword>
<keyword id="KW-0496">Mitochondrion</keyword>
<keyword id="KW-0547">Nucleotide-binding</keyword>
<keyword id="KW-1267">Proteomics identification</keyword>
<keyword id="KW-1185">Reference proteome</keyword>
<gene>
    <name evidence="5" type="primary">AFG1L</name>
    <name type="synonym">AFG1</name>
    <name evidence="3" type="synonym">LACE1</name>
</gene>
<feature type="chain" id="PRO_0000279521" description="AFG1-like ATPase">
    <location>
        <begin position="1"/>
        <end position="481"/>
    </location>
</feature>
<feature type="binding site" evidence="4">
    <location>
        <begin position="136"/>
        <end position="143"/>
    </location>
    <ligand>
        <name>ATP</name>
        <dbReference type="ChEBI" id="CHEBI:30616"/>
    </ligand>
</feature>
<feature type="binding site" evidence="4">
    <location>
        <begin position="209"/>
        <end position="214"/>
    </location>
    <ligand>
        <name>ATP</name>
        <dbReference type="ChEBI" id="CHEBI:30616"/>
    </ligand>
</feature>
<feature type="mutagenesis site" description="Does not affect mitochondrial targeting. Increased amount of unprocessed protein form. Fails to rescue the increased accumulation of complex IV subunits in AFG1L-deficient cell line. Reduces mitochondrial targeting; when associated with V-143." evidence="1">
    <original>K</original>
    <variation>A</variation>
    <location>
        <position position="142"/>
    </location>
</feature>
<feature type="mutagenesis site" description="Reduces mitochondrial targeting. Increased amount of unprocessed protein form. Reduces mitochondrial targeting; when associated with A-142." evidence="1">
    <original>T</original>
    <variation>V</variation>
    <location>
        <position position="143"/>
    </location>
</feature>
<feature type="mutagenesis site" description="Does not affect subcellular location. Fails to rescue the increased accumulation of complex IV subunits in AFG1L-deficient cell line." evidence="1">
    <original>E</original>
    <variation>Q</variation>
    <location>
        <position position="214"/>
    </location>
</feature>
<comment type="function">
    <text evidence="1 2">Putative mitochondrial ATPase. Plays a role in mitochondrial morphology and mitochondrial protein metabolism. Promotes degradation of excess nuclear-encoded complex IV subunits (COX4I1, COX5A and COX6A1) and normal activity of complexes III and IV of the respiratory chain (PubMed:26759378, PubMed:27323408). Mediates mitochondrial translocation of TP53 and its transcription-independent apoptosis in response to genotoxic stress (PubMed:27323408).</text>
</comment>
<comment type="subunit">
    <text evidence="1 2">Found in several complexes of 140-500 kDa. Interacts with YME1L1 (PubMed:26759378). Interacts with COX4I1 (PubMed:26759378). Interacts with COX5A (PubMed:26759378). Interacts with TP53; mediates mitochondrial translocation of TP53 in response to genotoxic stress such as mitomycin C treatment (PubMed:27323408).</text>
</comment>
<comment type="interaction">
    <interactant intactId="EBI-2865743">
        <id>Q8WV93</id>
    </interactant>
    <interactant intactId="EBI-744695">
        <id>Q8N9N5</id>
        <label>BANP</label>
    </interactant>
    <organismsDiffer>false</organismsDiffer>
    <experiments>3</experiments>
</comment>
<comment type="interaction">
    <interactant intactId="EBI-2865743">
        <id>Q8WV93</id>
    </interactant>
    <interactant intactId="EBI-7062247">
        <id>Q9UHD4</id>
        <label>CIDEB</label>
    </interactant>
    <organismsDiffer>false</organismsDiffer>
    <experiments>3</experiments>
</comment>
<comment type="subcellular location">
    <subcellularLocation>
        <location evidence="1">Mitochondrion membrane</location>
    </subcellularLocation>
</comment>
<comment type="similarity">
    <text evidence="4">Belongs to the AFG1 ATPase family.</text>
</comment>
<name>AFG1L_HUMAN</name>
<proteinExistence type="evidence at protein level"/>
<reference key="1">
    <citation type="journal article" date="2002" name="Genomics">
        <title>Novel vertebrate genes and putative regulatory elements identified at kidney disease and NR2E1/fierce loci.</title>
        <authorList>
            <person name="Abrahams B.S."/>
            <person name="Mak G.M."/>
            <person name="Berry M.L."/>
            <person name="Palmquist D.L."/>
            <person name="Saionz J.R."/>
            <person name="Tay A."/>
            <person name="Tan Y.H."/>
            <person name="Brenner S."/>
            <person name="Simpson E.M."/>
            <person name="Venkatesh B."/>
        </authorList>
    </citation>
    <scope>NUCLEOTIDE SEQUENCE [MRNA]</scope>
    <source>
        <tissue>Retinoblastoma</tissue>
    </source>
</reference>
<reference key="2">
    <citation type="journal article" date="2003" name="Nature">
        <title>The DNA sequence and analysis of human chromosome 6.</title>
        <authorList>
            <person name="Mungall A.J."/>
            <person name="Palmer S.A."/>
            <person name="Sims S.K."/>
            <person name="Edwards C.A."/>
            <person name="Ashurst J.L."/>
            <person name="Wilming L."/>
            <person name="Jones M.C."/>
            <person name="Horton R."/>
            <person name="Hunt S.E."/>
            <person name="Scott C.E."/>
            <person name="Gilbert J.G.R."/>
            <person name="Clamp M.E."/>
            <person name="Bethel G."/>
            <person name="Milne S."/>
            <person name="Ainscough R."/>
            <person name="Almeida J.P."/>
            <person name="Ambrose K.D."/>
            <person name="Andrews T.D."/>
            <person name="Ashwell R.I.S."/>
            <person name="Babbage A.K."/>
            <person name="Bagguley C.L."/>
            <person name="Bailey J."/>
            <person name="Banerjee R."/>
            <person name="Barker D.J."/>
            <person name="Barlow K.F."/>
            <person name="Bates K."/>
            <person name="Beare D.M."/>
            <person name="Beasley H."/>
            <person name="Beasley O."/>
            <person name="Bird C.P."/>
            <person name="Blakey S.E."/>
            <person name="Bray-Allen S."/>
            <person name="Brook J."/>
            <person name="Brown A.J."/>
            <person name="Brown J.Y."/>
            <person name="Burford D.C."/>
            <person name="Burrill W."/>
            <person name="Burton J."/>
            <person name="Carder C."/>
            <person name="Carter N.P."/>
            <person name="Chapman J.C."/>
            <person name="Clark S.Y."/>
            <person name="Clark G."/>
            <person name="Clee C.M."/>
            <person name="Clegg S."/>
            <person name="Cobley V."/>
            <person name="Collier R.E."/>
            <person name="Collins J.E."/>
            <person name="Colman L.K."/>
            <person name="Corby N.R."/>
            <person name="Coville G.J."/>
            <person name="Culley K.M."/>
            <person name="Dhami P."/>
            <person name="Davies J."/>
            <person name="Dunn M."/>
            <person name="Earthrowl M.E."/>
            <person name="Ellington A.E."/>
            <person name="Evans K.A."/>
            <person name="Faulkner L."/>
            <person name="Francis M.D."/>
            <person name="Frankish A."/>
            <person name="Frankland J."/>
            <person name="French L."/>
            <person name="Garner P."/>
            <person name="Garnett J."/>
            <person name="Ghori M.J."/>
            <person name="Gilby L.M."/>
            <person name="Gillson C.J."/>
            <person name="Glithero R.J."/>
            <person name="Grafham D.V."/>
            <person name="Grant M."/>
            <person name="Gribble S."/>
            <person name="Griffiths C."/>
            <person name="Griffiths M.N.D."/>
            <person name="Hall R."/>
            <person name="Halls K.S."/>
            <person name="Hammond S."/>
            <person name="Harley J.L."/>
            <person name="Hart E.A."/>
            <person name="Heath P.D."/>
            <person name="Heathcott R."/>
            <person name="Holmes S.J."/>
            <person name="Howden P.J."/>
            <person name="Howe K.L."/>
            <person name="Howell G.R."/>
            <person name="Huckle E."/>
            <person name="Humphray S.J."/>
            <person name="Humphries M.D."/>
            <person name="Hunt A.R."/>
            <person name="Johnson C.M."/>
            <person name="Joy A.A."/>
            <person name="Kay M."/>
            <person name="Keenan S.J."/>
            <person name="Kimberley A.M."/>
            <person name="King A."/>
            <person name="Laird G.K."/>
            <person name="Langford C."/>
            <person name="Lawlor S."/>
            <person name="Leongamornlert D.A."/>
            <person name="Leversha M."/>
            <person name="Lloyd C.R."/>
            <person name="Lloyd D.M."/>
            <person name="Loveland J.E."/>
            <person name="Lovell J."/>
            <person name="Martin S."/>
            <person name="Mashreghi-Mohammadi M."/>
            <person name="Maslen G.L."/>
            <person name="Matthews L."/>
            <person name="McCann O.T."/>
            <person name="McLaren S.J."/>
            <person name="McLay K."/>
            <person name="McMurray A."/>
            <person name="Moore M.J.F."/>
            <person name="Mullikin J.C."/>
            <person name="Niblett D."/>
            <person name="Nickerson T."/>
            <person name="Novik K.L."/>
            <person name="Oliver K."/>
            <person name="Overton-Larty E.K."/>
            <person name="Parker A."/>
            <person name="Patel R."/>
            <person name="Pearce A.V."/>
            <person name="Peck A.I."/>
            <person name="Phillimore B.J.C.T."/>
            <person name="Phillips S."/>
            <person name="Plumb R.W."/>
            <person name="Porter K.M."/>
            <person name="Ramsey Y."/>
            <person name="Ranby S.A."/>
            <person name="Rice C.M."/>
            <person name="Ross M.T."/>
            <person name="Searle S.M."/>
            <person name="Sehra H.K."/>
            <person name="Sheridan E."/>
            <person name="Skuce C.D."/>
            <person name="Smith S."/>
            <person name="Smith M."/>
            <person name="Spraggon L."/>
            <person name="Squares S.L."/>
            <person name="Steward C.A."/>
            <person name="Sycamore N."/>
            <person name="Tamlyn-Hall G."/>
            <person name="Tester J."/>
            <person name="Theaker A.J."/>
            <person name="Thomas D.W."/>
            <person name="Thorpe A."/>
            <person name="Tracey A."/>
            <person name="Tromans A."/>
            <person name="Tubby B."/>
            <person name="Wall M."/>
            <person name="Wallis J.M."/>
            <person name="West A.P."/>
            <person name="White S.S."/>
            <person name="Whitehead S.L."/>
            <person name="Whittaker H."/>
            <person name="Wild A."/>
            <person name="Willey D.J."/>
            <person name="Wilmer T.E."/>
            <person name="Wood J.M."/>
            <person name="Wray P.W."/>
            <person name="Wyatt J.C."/>
            <person name="Young L."/>
            <person name="Younger R.M."/>
            <person name="Bentley D.R."/>
            <person name="Coulson A."/>
            <person name="Durbin R.M."/>
            <person name="Hubbard T."/>
            <person name="Sulston J.E."/>
            <person name="Dunham I."/>
            <person name="Rogers J."/>
            <person name="Beck S."/>
        </authorList>
    </citation>
    <scope>NUCLEOTIDE SEQUENCE [LARGE SCALE GENOMIC DNA]</scope>
</reference>
<reference key="3">
    <citation type="journal article" date="2004" name="Genome Res.">
        <title>The status, quality, and expansion of the NIH full-length cDNA project: the Mammalian Gene Collection (MGC).</title>
        <authorList>
            <consortium name="The MGC Project Team"/>
        </authorList>
    </citation>
    <scope>NUCLEOTIDE SEQUENCE [LARGE SCALE MRNA]</scope>
    <source>
        <tissue>Eye</tissue>
    </source>
</reference>
<reference key="4">
    <citation type="journal article" date="2016" name="Biochem. J.">
        <title>The mammalian homologue of yeast Afg1 ATPase (lactation elevated 1) mediates degradation of nuclear-encoded complex IV subunits.</title>
        <authorList>
            <person name="Cesnekova J."/>
            <person name="Rodinova M."/>
            <person name="Hansikova H."/>
            <person name="Houstek J."/>
            <person name="Zeman J."/>
            <person name="Stiburek L."/>
        </authorList>
    </citation>
    <scope>SUBCELLULAR LOCATION</scope>
    <scope>FUNCTION</scope>
    <scope>MUTAGENESIS OF LYS-142; THR-143 AND GLU-214</scope>
    <scope>INTERACTION WITH YME1L1</scope>
    <scope>COX4I1 AND COX5A</scope>
</reference>
<reference key="5">
    <citation type="journal article" date="2016" name="Oncotarget">
        <title>LACE1 interacts with p53 and mediates its mitochondrial translocation and apoptosis.</title>
        <authorList>
            <person name="Cesnekova J."/>
            <person name="Spacilova J."/>
            <person name="Hansikova H."/>
            <person name="Houstek J."/>
            <person name="Zeman J."/>
            <person name="Stiburek L."/>
        </authorList>
    </citation>
    <scope>INTERACTION WITH TP53</scope>
    <scope>SUBCELLULAR LOCATION</scope>
    <scope>FUNCTION</scope>
</reference>